<reference key="1">
    <citation type="journal article" date="2006" name="Genome Res.">
        <title>Massive genome erosion and functional adaptations provide insights into the symbiotic lifestyle of Sodalis glossinidius in the tsetse host.</title>
        <authorList>
            <person name="Toh H."/>
            <person name="Weiss B.L."/>
            <person name="Perkin S.A.H."/>
            <person name="Yamashita A."/>
            <person name="Oshima K."/>
            <person name="Hattori M."/>
            <person name="Aksoy S."/>
        </authorList>
    </citation>
    <scope>NUCLEOTIDE SEQUENCE [LARGE SCALE GENOMIC DNA]</scope>
    <source>
        <strain>morsitans</strain>
    </source>
</reference>
<organism>
    <name type="scientific">Sodalis glossinidius (strain morsitans)</name>
    <dbReference type="NCBI Taxonomy" id="343509"/>
    <lineage>
        <taxon>Bacteria</taxon>
        <taxon>Pseudomonadati</taxon>
        <taxon>Pseudomonadota</taxon>
        <taxon>Gammaproteobacteria</taxon>
        <taxon>Enterobacterales</taxon>
        <taxon>Bruguierivoracaceae</taxon>
        <taxon>Sodalis</taxon>
    </lineage>
</organism>
<gene>
    <name evidence="2" type="primary">rpsU</name>
    <name type="ordered locus">SG0253</name>
</gene>
<dbReference type="EMBL" id="AP008232">
    <property type="protein sequence ID" value="BAE73528.1"/>
    <property type="molecule type" value="Genomic_DNA"/>
</dbReference>
<dbReference type="RefSeq" id="WP_001144069.1">
    <property type="nucleotide sequence ID" value="NZ_LN854557.1"/>
</dbReference>
<dbReference type="SMR" id="Q2NWE7"/>
<dbReference type="STRING" id="343509.SG0253"/>
<dbReference type="GeneID" id="98390195"/>
<dbReference type="KEGG" id="sgl:SG0253"/>
<dbReference type="eggNOG" id="COG0828">
    <property type="taxonomic scope" value="Bacteria"/>
</dbReference>
<dbReference type="HOGENOM" id="CLU_159258_1_0_6"/>
<dbReference type="OrthoDB" id="9799244at2"/>
<dbReference type="BioCyc" id="SGLO343509:SGP1_RS02400-MONOMER"/>
<dbReference type="Proteomes" id="UP000001932">
    <property type="component" value="Chromosome"/>
</dbReference>
<dbReference type="GO" id="GO:1990904">
    <property type="term" value="C:ribonucleoprotein complex"/>
    <property type="evidence" value="ECO:0007669"/>
    <property type="project" value="UniProtKB-KW"/>
</dbReference>
<dbReference type="GO" id="GO:0005840">
    <property type="term" value="C:ribosome"/>
    <property type="evidence" value="ECO:0007669"/>
    <property type="project" value="UniProtKB-KW"/>
</dbReference>
<dbReference type="GO" id="GO:0003735">
    <property type="term" value="F:structural constituent of ribosome"/>
    <property type="evidence" value="ECO:0007669"/>
    <property type="project" value="InterPro"/>
</dbReference>
<dbReference type="GO" id="GO:0006412">
    <property type="term" value="P:translation"/>
    <property type="evidence" value="ECO:0007669"/>
    <property type="project" value="UniProtKB-UniRule"/>
</dbReference>
<dbReference type="FunFam" id="1.20.5.1150:FF:000001">
    <property type="entry name" value="30S ribosomal protein S21"/>
    <property type="match status" value="1"/>
</dbReference>
<dbReference type="Gene3D" id="1.20.5.1150">
    <property type="entry name" value="Ribosomal protein S8"/>
    <property type="match status" value="1"/>
</dbReference>
<dbReference type="HAMAP" id="MF_00358">
    <property type="entry name" value="Ribosomal_bS21"/>
    <property type="match status" value="1"/>
</dbReference>
<dbReference type="InterPro" id="IPR001911">
    <property type="entry name" value="Ribosomal_bS21"/>
</dbReference>
<dbReference type="InterPro" id="IPR018278">
    <property type="entry name" value="Ribosomal_bS21_CS"/>
</dbReference>
<dbReference type="InterPro" id="IPR038380">
    <property type="entry name" value="Ribosomal_bS21_sf"/>
</dbReference>
<dbReference type="NCBIfam" id="TIGR00030">
    <property type="entry name" value="S21p"/>
    <property type="match status" value="1"/>
</dbReference>
<dbReference type="PANTHER" id="PTHR21109">
    <property type="entry name" value="MITOCHONDRIAL 28S RIBOSOMAL PROTEIN S21"/>
    <property type="match status" value="1"/>
</dbReference>
<dbReference type="PANTHER" id="PTHR21109:SF22">
    <property type="entry name" value="SMALL RIBOSOMAL SUBUNIT PROTEIN BS21"/>
    <property type="match status" value="1"/>
</dbReference>
<dbReference type="Pfam" id="PF01165">
    <property type="entry name" value="Ribosomal_S21"/>
    <property type="match status" value="1"/>
</dbReference>
<dbReference type="PRINTS" id="PR00976">
    <property type="entry name" value="RIBOSOMALS21"/>
</dbReference>
<dbReference type="PROSITE" id="PS01181">
    <property type="entry name" value="RIBOSOMAL_S21"/>
    <property type="match status" value="1"/>
</dbReference>
<feature type="initiator methionine" description="Removed" evidence="1">
    <location>
        <position position="1"/>
    </location>
</feature>
<feature type="chain" id="PRO_0000266769" description="Small ribosomal subunit protein bS21">
    <location>
        <begin position="2"/>
        <end position="71"/>
    </location>
</feature>
<feature type="region of interest" description="Disordered" evidence="3">
    <location>
        <begin position="43"/>
        <end position="71"/>
    </location>
</feature>
<feature type="compositionally biased region" description="Basic residues" evidence="3">
    <location>
        <begin position="46"/>
        <end position="59"/>
    </location>
</feature>
<feature type="compositionally biased region" description="Basic and acidic residues" evidence="3">
    <location>
        <begin position="60"/>
        <end position="71"/>
    </location>
</feature>
<name>RS21_SODGM</name>
<protein>
    <recommendedName>
        <fullName evidence="2">Small ribosomal subunit protein bS21</fullName>
    </recommendedName>
    <alternativeName>
        <fullName evidence="4">30S ribosomal protein S21</fullName>
    </alternativeName>
</protein>
<accession>Q2NWE7</accession>
<comment type="similarity">
    <text evidence="2">Belongs to the bacterial ribosomal protein bS21 family.</text>
</comment>
<evidence type="ECO:0000250" key="1"/>
<evidence type="ECO:0000255" key="2">
    <source>
        <dbReference type="HAMAP-Rule" id="MF_00358"/>
    </source>
</evidence>
<evidence type="ECO:0000256" key="3">
    <source>
        <dbReference type="SAM" id="MobiDB-lite"/>
    </source>
</evidence>
<evidence type="ECO:0000305" key="4"/>
<keyword id="KW-0687">Ribonucleoprotein</keyword>
<keyword id="KW-0689">Ribosomal protein</keyword>
<sequence>MPVIKVRENEPFDVALRRFKRSCEKAGVLAEVRRREFYEKPTTERKRAKASAVKRHAKKLARENARRTRLY</sequence>
<proteinExistence type="inferred from homology"/>